<reference key="1">
    <citation type="journal article" date="1998" name="J. Cell Sci.">
        <title>Aberrant intracellular targeting and cell cycle-dependent phosphorylation of emerin contribute to the Emery-Dreifuss muscular dystrophy phenotype.</title>
        <authorList>
            <person name="Ellis J.A."/>
            <person name="Craxton M."/>
            <person name="Yates J.R.W."/>
            <person name="Kendrick-Jones J."/>
        </authorList>
    </citation>
    <scope>NUCLEOTIDE SEQUENCE [MRNA]</scope>
    <source>
        <strain>Sprague-Dawley</strain>
        <tissue>Forebrain</tissue>
    </source>
</reference>
<reference key="2">
    <citation type="journal article" date="2012" name="Nat. Commun.">
        <title>Quantitative maps of protein phosphorylation sites across 14 different rat organs and tissues.</title>
        <authorList>
            <person name="Lundby A."/>
            <person name="Secher A."/>
            <person name="Lage K."/>
            <person name="Nordsborg N.B."/>
            <person name="Dmytriyev A."/>
            <person name="Lundby C."/>
            <person name="Olsen J.V."/>
        </authorList>
    </citation>
    <scope>PHOSPHORYLATION [LARGE SCALE ANALYSIS] AT SER-69; SER-72; SER-142; SER-143 AND SER-144</scope>
    <scope>IDENTIFICATION BY MASS SPECTROMETRY [LARGE SCALE ANALYSIS]</scope>
</reference>
<gene>
    <name type="primary">Emd</name>
</gene>
<dbReference type="EMBL" id="X98377">
    <property type="protein sequence ID" value="CAA67023.1"/>
    <property type="molecule type" value="mRNA"/>
</dbReference>
<dbReference type="RefSeq" id="NP_037080.1">
    <property type="nucleotide sequence ID" value="NM_012948.1"/>
</dbReference>
<dbReference type="SMR" id="Q63190"/>
<dbReference type="FunCoup" id="Q63190">
    <property type="interactions" value="972"/>
</dbReference>
<dbReference type="STRING" id="10116.ENSRNOP00000075584"/>
<dbReference type="iPTMnet" id="Q63190"/>
<dbReference type="PhosphoSitePlus" id="Q63190"/>
<dbReference type="jPOST" id="Q63190"/>
<dbReference type="PaxDb" id="10116-ENSRNOP00000053121"/>
<dbReference type="GeneID" id="25437"/>
<dbReference type="KEGG" id="rno:25437"/>
<dbReference type="AGR" id="RGD:2551"/>
<dbReference type="CTD" id="2010"/>
<dbReference type="RGD" id="2551">
    <property type="gene designation" value="Emd"/>
</dbReference>
<dbReference type="eggNOG" id="ENOG502S5SJ">
    <property type="taxonomic scope" value="Eukaryota"/>
</dbReference>
<dbReference type="InParanoid" id="Q63190"/>
<dbReference type="OrthoDB" id="10015574at2759"/>
<dbReference type="PhylomeDB" id="Q63190"/>
<dbReference type="Reactome" id="R-RNO-2980766">
    <property type="pathway name" value="Nuclear Envelope Breakdown"/>
</dbReference>
<dbReference type="Reactome" id="R-RNO-2995383">
    <property type="pathway name" value="Initiation of Nuclear Envelope (NE) Reformation"/>
</dbReference>
<dbReference type="Reactome" id="R-RNO-4419969">
    <property type="pathway name" value="Depolymerization of the Nuclear Lamina"/>
</dbReference>
<dbReference type="Reactome" id="R-RNO-9013149">
    <property type="pathway name" value="RAC1 GTPase cycle"/>
</dbReference>
<dbReference type="Reactome" id="R-RNO-9013404">
    <property type="pathway name" value="RAC2 GTPase cycle"/>
</dbReference>
<dbReference type="Reactome" id="R-RNO-9013405">
    <property type="pathway name" value="RHOD GTPase cycle"/>
</dbReference>
<dbReference type="Reactome" id="R-RNO-9013408">
    <property type="pathway name" value="RHOG GTPase cycle"/>
</dbReference>
<dbReference type="Reactome" id="R-RNO-9609523">
    <property type="pathway name" value="Insertion of tail-anchored proteins into the endoplasmic reticulum membrane"/>
</dbReference>
<dbReference type="PRO" id="PR:Q63190"/>
<dbReference type="Proteomes" id="UP000002494">
    <property type="component" value="Unplaced"/>
</dbReference>
<dbReference type="GO" id="GO:0032541">
    <property type="term" value="C:cortical endoplasmic reticulum"/>
    <property type="evidence" value="ECO:0000266"/>
    <property type="project" value="RGD"/>
</dbReference>
<dbReference type="GO" id="GO:0005737">
    <property type="term" value="C:cytoplasm"/>
    <property type="evidence" value="ECO:0000266"/>
    <property type="project" value="RGD"/>
</dbReference>
<dbReference type="GO" id="GO:0005874">
    <property type="term" value="C:microtubule"/>
    <property type="evidence" value="ECO:0007669"/>
    <property type="project" value="UniProtKB-KW"/>
</dbReference>
<dbReference type="GO" id="GO:0005635">
    <property type="term" value="C:nuclear envelope"/>
    <property type="evidence" value="ECO:0000314"/>
    <property type="project" value="RGD"/>
</dbReference>
<dbReference type="GO" id="GO:0005637">
    <property type="term" value="C:nuclear inner membrane"/>
    <property type="evidence" value="ECO:0000266"/>
    <property type="project" value="RGD"/>
</dbReference>
<dbReference type="GO" id="GO:0031965">
    <property type="term" value="C:nuclear membrane"/>
    <property type="evidence" value="ECO:0000266"/>
    <property type="project" value="RGD"/>
</dbReference>
<dbReference type="GO" id="GO:0005640">
    <property type="term" value="C:nuclear outer membrane"/>
    <property type="evidence" value="ECO:0000266"/>
    <property type="project" value="RGD"/>
</dbReference>
<dbReference type="GO" id="GO:0005654">
    <property type="term" value="C:nucleoplasm"/>
    <property type="evidence" value="ECO:0000266"/>
    <property type="project" value="RGD"/>
</dbReference>
<dbReference type="GO" id="GO:0005634">
    <property type="term" value="C:nucleus"/>
    <property type="evidence" value="ECO:0000266"/>
    <property type="project" value="RGD"/>
</dbReference>
<dbReference type="GO" id="GO:0005819">
    <property type="term" value="C:spindle"/>
    <property type="evidence" value="ECO:0000318"/>
    <property type="project" value="GO_Central"/>
</dbReference>
<dbReference type="GO" id="GO:0031616">
    <property type="term" value="C:spindle pole centrosome"/>
    <property type="evidence" value="ECO:0000266"/>
    <property type="project" value="RGD"/>
</dbReference>
<dbReference type="GO" id="GO:0160045">
    <property type="term" value="C:TMEM240-body"/>
    <property type="evidence" value="ECO:0000266"/>
    <property type="project" value="RGD"/>
</dbReference>
<dbReference type="GO" id="GO:0003779">
    <property type="term" value="F:actin binding"/>
    <property type="evidence" value="ECO:0000266"/>
    <property type="project" value="RGD"/>
</dbReference>
<dbReference type="GO" id="GO:0048487">
    <property type="term" value="F:beta-tubulin binding"/>
    <property type="evidence" value="ECO:0000266"/>
    <property type="project" value="RGD"/>
</dbReference>
<dbReference type="GO" id="GO:1990000">
    <property type="term" value="P:amyloid fibril formation"/>
    <property type="evidence" value="ECO:0000266"/>
    <property type="project" value="RGD"/>
</dbReference>
<dbReference type="GO" id="GO:0071363">
    <property type="term" value="P:cellular response to growth factor stimulus"/>
    <property type="evidence" value="ECO:0000266"/>
    <property type="project" value="RGD"/>
</dbReference>
<dbReference type="GO" id="GO:0090090">
    <property type="term" value="P:negative regulation of canonical Wnt signaling pathway"/>
    <property type="evidence" value="ECO:0000266"/>
    <property type="project" value="RGD"/>
</dbReference>
<dbReference type="GO" id="GO:0048147">
    <property type="term" value="P:negative regulation of fibroblast proliferation"/>
    <property type="evidence" value="ECO:0000266"/>
    <property type="project" value="RGD"/>
</dbReference>
<dbReference type="GO" id="GO:0071763">
    <property type="term" value="P:nuclear membrane organization"/>
    <property type="evidence" value="ECO:0000266"/>
    <property type="project" value="RGD"/>
</dbReference>
<dbReference type="GO" id="GO:0031468">
    <property type="term" value="P:nuclear membrane reassembly"/>
    <property type="evidence" value="ECO:0000270"/>
    <property type="project" value="RGD"/>
</dbReference>
<dbReference type="GO" id="GO:0046827">
    <property type="term" value="P:positive regulation of protein export from nucleus"/>
    <property type="evidence" value="ECO:0000266"/>
    <property type="project" value="RGD"/>
</dbReference>
<dbReference type="GO" id="GO:0060828">
    <property type="term" value="P:regulation of canonical Wnt signaling pathway"/>
    <property type="evidence" value="ECO:0000266"/>
    <property type="project" value="RGD"/>
</dbReference>
<dbReference type="GO" id="GO:0035914">
    <property type="term" value="P:skeletal muscle cell differentiation"/>
    <property type="evidence" value="ECO:0000266"/>
    <property type="project" value="RGD"/>
</dbReference>
<dbReference type="CDD" id="cd12939">
    <property type="entry name" value="LEM_emerin"/>
    <property type="match status" value="1"/>
</dbReference>
<dbReference type="FunFam" id="1.10.720.40:FF:000001">
    <property type="entry name" value="LEM domain containing 2, isoform CRA_a"/>
    <property type="match status" value="1"/>
</dbReference>
<dbReference type="Gene3D" id="1.10.720.40">
    <property type="match status" value="1"/>
</dbReference>
<dbReference type="InterPro" id="IPR035004">
    <property type="entry name" value="Emerin"/>
</dbReference>
<dbReference type="InterPro" id="IPR011015">
    <property type="entry name" value="LEM/LEM-like_dom_sf"/>
</dbReference>
<dbReference type="InterPro" id="IPR003887">
    <property type="entry name" value="LEM_dom"/>
</dbReference>
<dbReference type="InterPro" id="IPR034989">
    <property type="entry name" value="LEM_emerin"/>
</dbReference>
<dbReference type="PANTHER" id="PTHR15171">
    <property type="entry name" value="EMERIN"/>
    <property type="match status" value="1"/>
</dbReference>
<dbReference type="PANTHER" id="PTHR15171:SF2">
    <property type="entry name" value="EMERIN"/>
    <property type="match status" value="1"/>
</dbReference>
<dbReference type="Pfam" id="PF03020">
    <property type="entry name" value="LEM"/>
    <property type="match status" value="1"/>
</dbReference>
<dbReference type="SMART" id="SM00540">
    <property type="entry name" value="LEM"/>
    <property type="match status" value="1"/>
</dbReference>
<dbReference type="SUPFAM" id="SSF63451">
    <property type="entry name" value="LEM domain"/>
    <property type="match status" value="1"/>
</dbReference>
<dbReference type="PROSITE" id="PS50954">
    <property type="entry name" value="LEM"/>
    <property type="match status" value="1"/>
</dbReference>
<comment type="function">
    <text evidence="3">Stabilizes and promotes the formation of a nuclear actin cortical network. Stimulates actin polymerization in vitro by binding and stabilizing the pointed end of growing filaments. Inhibits beta-catenin activity by preventing its accumulation in the nucleus. Acts by influencing the nuclear accumulation of beta-catenin through a CRM1-dependent export pathway. Links centrosomes to the nuclear envelope via a microtubule association. Required for proper localization of non-farnesylated prelamin-A/C. Together with NEMP1, contributes to nuclear envelope stiffness in germ cells.</text>
</comment>
<comment type="subunit">
    <text evidence="2 3">Interacts with lamins A and C, BANF1, GMCL, BCLAF1 and YTHDC1/YT521. Interacts with TMEM43; the interaction retains emerin in the inner nuclear membrane. Interacts with ACTB, SPTAN1, F-actin, CTNNB1 and beta-tubulin. Interacts with SUN1 and SUN2. Interacts with TMEM201 (By similarity). Interacts with NEMP1 (By similarity).</text>
</comment>
<comment type="subcellular location">
    <subcellularLocation>
        <location evidence="3">Nucleus inner membrane</location>
        <topology evidence="1">Single-pass membrane protein</topology>
        <orientation evidence="3">Nucleoplasmic side</orientation>
    </subcellularLocation>
    <subcellularLocation>
        <location evidence="1">Nucleus outer membrane</location>
    </subcellularLocation>
    <text evidence="1">Colocalized with BANF1 at the central region of the assembling nuclear rim, near spindle-attachment sites. The accumulation of different intermediates of prelamin-A/C (non-farnesylated or carboxymethylated farnesylated prelamin-A/C) in fibroblasts modify its localization in the nucleus (By similarity).</text>
</comment>
<feature type="chain" id="PRO_0000206142" description="Emerin">
    <location>
        <begin position="1"/>
        <end position="260"/>
    </location>
</feature>
<feature type="transmembrane region" description="Helical" evidence="4">
    <location>
        <begin position="225"/>
        <end position="245"/>
    </location>
</feature>
<feature type="domain" description="LEM" evidence="5">
    <location>
        <begin position="1"/>
        <end position="45"/>
    </location>
</feature>
<feature type="region of interest" description="Interaction with F-actin" evidence="1">
    <location>
        <begin position="46"/>
        <end position="224"/>
    </location>
</feature>
<feature type="region of interest" description="Interaction with CTNNB1" evidence="1">
    <location>
        <begin position="169"/>
        <end position="188"/>
    </location>
</feature>
<feature type="region of interest" description="Disordered" evidence="6">
    <location>
        <begin position="184"/>
        <end position="206"/>
    </location>
</feature>
<feature type="compositionally biased region" description="Low complexity" evidence="6">
    <location>
        <begin position="187"/>
        <end position="201"/>
    </location>
</feature>
<feature type="modified residue" description="N-acetylmethionine" evidence="3">
    <location>
        <position position="1"/>
    </location>
</feature>
<feature type="modified residue" description="Phosphoserine" evidence="3">
    <location>
        <position position="8"/>
    </location>
</feature>
<feature type="modified residue" description="Phosphoserine" evidence="3">
    <location>
        <position position="29"/>
    </location>
</feature>
<feature type="modified residue" description="Phosphoserine; by PKA" evidence="3">
    <location>
        <position position="49"/>
    </location>
</feature>
<feature type="modified residue" description="Phosphoserine" evidence="3">
    <location>
        <position position="54"/>
    </location>
</feature>
<feature type="modified residue" description="Phosphoserine" evidence="7">
    <location>
        <position position="69"/>
    </location>
</feature>
<feature type="modified residue" description="Phosphoserine" evidence="7">
    <location>
        <position position="72"/>
    </location>
</feature>
<feature type="modified residue" description="Phosphoserine" evidence="3">
    <location>
        <position position="88"/>
    </location>
</feature>
<feature type="modified residue" description="Phosphoserine" evidence="3">
    <location>
        <position position="99"/>
    </location>
</feature>
<feature type="modified residue" description="Phosphoserine" evidence="7">
    <location>
        <position position="142"/>
    </location>
</feature>
<feature type="modified residue" description="Phosphoserine" evidence="7">
    <location>
        <position position="143"/>
    </location>
</feature>
<feature type="modified residue" description="Phosphoserine" evidence="7">
    <location>
        <position position="144"/>
    </location>
</feature>
<feature type="modified residue" description="Phosphotyrosine" evidence="2">
    <location>
        <position position="162"/>
    </location>
</feature>
<feature type="modified residue" description="Phosphoserine" evidence="3">
    <location>
        <position position="172"/>
    </location>
</feature>
<feature type="modified residue" description="Phosphoserine" evidence="3">
    <location>
        <position position="175"/>
    </location>
</feature>
<feature type="modified residue" description="Phosphoserine" evidence="2">
    <location>
        <position position="177"/>
    </location>
</feature>
<proteinExistence type="evidence at protein level"/>
<keyword id="KW-0007">Acetylation</keyword>
<keyword id="KW-0009">Actin-binding</keyword>
<keyword id="KW-0472">Membrane</keyword>
<keyword id="KW-0493">Microtubule</keyword>
<keyword id="KW-0539">Nucleus</keyword>
<keyword id="KW-0597">Phosphoprotein</keyword>
<keyword id="KW-1185">Reference proteome</keyword>
<keyword id="KW-0812">Transmembrane</keyword>
<keyword id="KW-1133">Transmembrane helix</keyword>
<protein>
    <recommendedName>
        <fullName>Emerin</fullName>
    </recommendedName>
</protein>
<evidence type="ECO:0000250" key="1"/>
<evidence type="ECO:0000250" key="2">
    <source>
        <dbReference type="UniProtKB" id="O08579"/>
    </source>
</evidence>
<evidence type="ECO:0000250" key="3">
    <source>
        <dbReference type="UniProtKB" id="P50402"/>
    </source>
</evidence>
<evidence type="ECO:0000255" key="4"/>
<evidence type="ECO:0000255" key="5">
    <source>
        <dbReference type="PROSITE-ProRule" id="PRU00313"/>
    </source>
</evidence>
<evidence type="ECO:0000256" key="6">
    <source>
        <dbReference type="SAM" id="MobiDB-lite"/>
    </source>
</evidence>
<evidence type="ECO:0007744" key="7">
    <source>
    </source>
</evidence>
<organism>
    <name type="scientific">Rattus norvegicus</name>
    <name type="common">Rat</name>
    <dbReference type="NCBI Taxonomy" id="10116"/>
    <lineage>
        <taxon>Eukaryota</taxon>
        <taxon>Metazoa</taxon>
        <taxon>Chordata</taxon>
        <taxon>Craniata</taxon>
        <taxon>Vertebrata</taxon>
        <taxon>Euteleostomi</taxon>
        <taxon>Mammalia</taxon>
        <taxon>Eutheria</taxon>
        <taxon>Euarchontoglires</taxon>
        <taxon>Glires</taxon>
        <taxon>Rodentia</taxon>
        <taxon>Myomorpha</taxon>
        <taxon>Muroidea</taxon>
        <taxon>Muridae</taxon>
        <taxon>Murinae</taxon>
        <taxon>Rattus</taxon>
    </lineage>
</organism>
<name>EMD_RAT</name>
<sequence>MDDYAVLSDTELAAVLRQYNIPHGPILGSTRKLYEKKIFEYETQRRRLSPPSSSSSSFSYRFSDLDSASVDSDMYDLPKKEDALLYQSKDYNDDYYEESYLTTRTYGEPESVGMSKSFRRPGTSLVDADDTFHHQVRDDIFSSSEEEGKDRERPIYGRDSAYQSIAEYRPISNVSRSSLGLSYYPRSSTSSVSSSSSSPSSWLTRRAIRPEKQAPTAALGQDRQVPLWGQLLLFLAFATFLLFVYYSIQAQEGNPFWMDP</sequence>
<accession>Q63190</accession>